<evidence type="ECO:0000255" key="1">
    <source>
        <dbReference type="PROSITE-ProRule" id="PRU00037"/>
    </source>
</evidence>
<evidence type="ECO:0000269" key="2">
    <source>
    </source>
</evidence>
<evidence type="ECO:0000269" key="3">
    <source>
    </source>
</evidence>
<evidence type="ECO:0000269" key="4">
    <source>
    </source>
</evidence>
<evidence type="ECO:0000269" key="5">
    <source>
    </source>
</evidence>
<evidence type="ECO:0000305" key="6"/>
<feature type="chain" id="PRO_0000198964" description="Rho-related BTB domain-containing protein 3">
    <location>
        <begin position="1"/>
        <end position="611"/>
    </location>
</feature>
<feature type="domain" description="BTB 1" evidence="1">
    <location>
        <begin position="254"/>
        <end position="356"/>
    </location>
</feature>
<feature type="domain" description="BTB 2" evidence="1">
    <location>
        <begin position="420"/>
        <end position="487"/>
    </location>
</feature>
<feature type="region of interest" description="Rho-like">
    <location>
        <begin position="1"/>
        <end position="175"/>
    </location>
</feature>
<feature type="region of interest" description="Interaction with Rab9">
    <location>
        <begin position="420"/>
        <end position="611"/>
    </location>
</feature>
<feature type="sequence variant" id="VAR_030490" description="In dbSNP:rs17855649." evidence="4">
    <original>R</original>
    <variation>Q</variation>
    <location>
        <position position="20"/>
    </location>
</feature>
<feature type="sequence variant" id="VAR_018481" description="In dbSNP:rs2302980.">
    <original>P</original>
    <variation>R</variation>
    <location>
        <position position="21"/>
    </location>
</feature>
<feature type="sequence variant" id="VAR_018482" description="In dbSNP:rs34899." evidence="2 3">
    <original>N</original>
    <variation>D</variation>
    <location>
        <position position="262"/>
    </location>
</feature>
<feature type="mutagenesis site" description="Abolishes ATP-binding." evidence="5">
    <original>N</original>
    <variation>D</variation>
    <location>
        <position position="138"/>
    </location>
</feature>
<feature type="mutagenesis site" description="Abolishes interaction with RAB9A." evidence="5">
    <original>A</original>
    <variation>T</variation>
    <location>
        <position position="498"/>
    </location>
</feature>
<feature type="mutagenesis site" description="Abolishes interaction with RAB9A." evidence="5">
    <original>D</original>
    <variation>E</variation>
    <location>
        <position position="532"/>
    </location>
</feature>
<feature type="mutagenesis site" description="Abolishes interaction with RAB9A." evidence="5">
    <original>I</original>
    <variation>K</variation>
    <location>
        <position position="533"/>
    </location>
</feature>
<feature type="mutagenesis site" description="Does not affect subcellular location, suggesting this protein is not prenylated." evidence="5">
    <location>
        <begin position="608"/>
        <end position="611"/>
    </location>
</feature>
<protein>
    <recommendedName>
        <fullName>Rho-related BTB domain-containing protein 3</fullName>
        <ecNumber>3.6.1.-</ecNumber>
    </recommendedName>
</protein>
<sequence>MSIHIVALGNEGDTFHQDNRPSGLIRTYLGRSPLVSGDESSLLLNAASTVARPVFTEYQASAFGNVKLVVHDCPVWDIFDSDWYTSRNLIGGADIIVIKYNVNDKFSFHEVKDNYIPVIKRALNSVPVIIAAVGTRQNEELPCTCPLCTSDRGSCVSTTEGIQLAKELGATYLELHSLDDFYIGKYFGGVLEYFMIQALNQKTSEKMKKRKMSNSFHGIRPPQLEQPEKMPVLKAEASHYNSDLNNLLFCCQCVDVVFYNPNLKKVVEAHKIVLCAVSHVFMLLFNVKSPTDIQDSSIIRTTQDLFAINRDTAFPGASHESSGNPPLRVIVKDALFCSCLSDILRFIYSGAFQWEELEEDIRKKLKDSGDVSNVIEKVKCILKTPGKINCLRNCKTYQARKPLWFYNTSLKFFLNKPMLADVVFEIQGTTVPAHRAILVARCEVMAAMFNGNYMEAKSVLIPVYGVSKETFLSFLEYLYTDSCCPAGIFQAMCLLICAEMYQVSRLQHICELFIITQLQSMPSRELASMNLDIVDLLKKAKFHHSDCLSTWLLHFIATNYLIFSQKPEFQDLSVEERSFVEKHRWPSNMYLKQLAEYRKYIHSRKCRCLVM</sequence>
<gene>
    <name type="primary">RHOBTB3</name>
    <name type="synonym">KIAA0878</name>
</gene>
<dbReference type="EC" id="3.6.1.-"/>
<dbReference type="EMBL" id="AB020685">
    <property type="protein sequence ID" value="BAA74901.2"/>
    <property type="status" value="ALT_INIT"/>
    <property type="molecule type" value="mRNA"/>
</dbReference>
<dbReference type="EMBL" id="AK290034">
    <property type="protein sequence ID" value="BAF82723.1"/>
    <property type="molecule type" value="mRNA"/>
</dbReference>
<dbReference type="EMBL" id="BC020231">
    <property type="protein sequence ID" value="AAH20231.1"/>
    <property type="molecule type" value="mRNA"/>
</dbReference>
<dbReference type="EMBL" id="BC041337">
    <property type="protein sequence ID" value="AAH41337.1"/>
    <property type="molecule type" value="mRNA"/>
</dbReference>
<dbReference type="CCDS" id="CCDS4077.1"/>
<dbReference type="RefSeq" id="NP_055714.3">
    <property type="nucleotide sequence ID" value="NM_014899.3"/>
</dbReference>
<dbReference type="SMR" id="O94955"/>
<dbReference type="BioGRID" id="116510">
    <property type="interactions" value="137"/>
</dbReference>
<dbReference type="CORUM" id="O94955"/>
<dbReference type="FunCoup" id="O94955">
    <property type="interactions" value="981"/>
</dbReference>
<dbReference type="IntAct" id="O94955">
    <property type="interactions" value="78"/>
</dbReference>
<dbReference type="STRING" id="9606.ENSP00000369318"/>
<dbReference type="GlyConnect" id="1717">
    <property type="glycosylation" value="2 N-Linked glycans (1 site)"/>
</dbReference>
<dbReference type="GlyCosmos" id="O94955">
    <property type="glycosylation" value="1 site, 2 glycans"/>
</dbReference>
<dbReference type="GlyGen" id="O94955">
    <property type="glycosylation" value="1 site, 2 N-linked glycans (1 site)"/>
</dbReference>
<dbReference type="iPTMnet" id="O94955"/>
<dbReference type="PhosphoSitePlus" id="O94955"/>
<dbReference type="BioMuta" id="RHOBTB3"/>
<dbReference type="jPOST" id="O94955"/>
<dbReference type="MassIVE" id="O94955"/>
<dbReference type="PaxDb" id="9606-ENSP00000369318"/>
<dbReference type="PeptideAtlas" id="O94955"/>
<dbReference type="ProteomicsDB" id="50576"/>
<dbReference type="Pumba" id="O94955"/>
<dbReference type="Antibodypedia" id="636">
    <property type="antibodies" value="132 antibodies from 27 providers"/>
</dbReference>
<dbReference type="DNASU" id="22836"/>
<dbReference type="Ensembl" id="ENST00000379982.8">
    <property type="protein sequence ID" value="ENSP00000369318.3"/>
    <property type="gene ID" value="ENSG00000164292.13"/>
</dbReference>
<dbReference type="GeneID" id="22836"/>
<dbReference type="KEGG" id="hsa:22836"/>
<dbReference type="MANE-Select" id="ENST00000379982.8">
    <property type="protein sequence ID" value="ENSP00000369318.3"/>
    <property type="RefSeq nucleotide sequence ID" value="NM_014899.4"/>
    <property type="RefSeq protein sequence ID" value="NP_055714.3"/>
</dbReference>
<dbReference type="UCSC" id="uc003klm.4">
    <property type="organism name" value="human"/>
</dbReference>
<dbReference type="AGR" id="HGNC:18757"/>
<dbReference type="CTD" id="22836"/>
<dbReference type="DisGeNET" id="22836"/>
<dbReference type="GeneCards" id="RHOBTB3"/>
<dbReference type="HGNC" id="HGNC:18757">
    <property type="gene designation" value="RHOBTB3"/>
</dbReference>
<dbReference type="HPA" id="ENSG00000164292">
    <property type="expression patterns" value="Low tissue specificity"/>
</dbReference>
<dbReference type="MIM" id="607353">
    <property type="type" value="gene"/>
</dbReference>
<dbReference type="neXtProt" id="NX_O94955"/>
<dbReference type="OpenTargets" id="ENSG00000164292"/>
<dbReference type="PharmGKB" id="PA38679"/>
<dbReference type="VEuPathDB" id="HostDB:ENSG00000164292"/>
<dbReference type="eggNOG" id="KOG0393">
    <property type="taxonomic scope" value="Eukaryota"/>
</dbReference>
<dbReference type="GeneTree" id="ENSGT00850000132411"/>
<dbReference type="HOGENOM" id="CLU_029897_0_0_1"/>
<dbReference type="InParanoid" id="O94955"/>
<dbReference type="OMA" id="CACRERD"/>
<dbReference type="OrthoDB" id="10251809at2759"/>
<dbReference type="PAN-GO" id="O94955">
    <property type="GO annotations" value="14 GO annotations based on evolutionary models"/>
</dbReference>
<dbReference type="PhylomeDB" id="O94955"/>
<dbReference type="TreeFam" id="TF323347"/>
<dbReference type="PathwayCommons" id="O94955"/>
<dbReference type="Reactome" id="R-HSA-6811440">
    <property type="pathway name" value="Retrograde transport at the Trans-Golgi-Network"/>
</dbReference>
<dbReference type="Reactome" id="R-HSA-9706019">
    <property type="pathway name" value="RHOBTB3 ATPase cycle"/>
</dbReference>
<dbReference type="SABIO-RK" id="O94955"/>
<dbReference type="SignaLink" id="O94955"/>
<dbReference type="SIGNOR" id="O94955"/>
<dbReference type="BioGRID-ORCS" id="22836">
    <property type="hits" value="13 hits in 1193 CRISPR screens"/>
</dbReference>
<dbReference type="ChiTaRS" id="RHOBTB3">
    <property type="organism name" value="human"/>
</dbReference>
<dbReference type="GeneWiki" id="RHOBTB3"/>
<dbReference type="GenomeRNAi" id="22836"/>
<dbReference type="Pharos" id="O94955">
    <property type="development level" value="Tbio"/>
</dbReference>
<dbReference type="PRO" id="PR:O94955"/>
<dbReference type="Proteomes" id="UP000005640">
    <property type="component" value="Chromosome 5"/>
</dbReference>
<dbReference type="RNAct" id="O94955">
    <property type="molecule type" value="protein"/>
</dbReference>
<dbReference type="Bgee" id="ENSG00000164292">
    <property type="expression patterns" value="Expressed in adrenal tissue and 214 other cell types or tissues"/>
</dbReference>
<dbReference type="ExpressionAtlas" id="O94955">
    <property type="expression patterns" value="baseline and differential"/>
</dbReference>
<dbReference type="GO" id="GO:0005737">
    <property type="term" value="C:cytoplasm"/>
    <property type="evidence" value="ECO:0000318"/>
    <property type="project" value="GO_Central"/>
</dbReference>
<dbReference type="GO" id="GO:0005829">
    <property type="term" value="C:cytosol"/>
    <property type="evidence" value="ECO:0007669"/>
    <property type="project" value="GOC"/>
</dbReference>
<dbReference type="GO" id="GO:0070062">
    <property type="term" value="C:extracellular exosome"/>
    <property type="evidence" value="ECO:0007005"/>
    <property type="project" value="UniProtKB"/>
</dbReference>
<dbReference type="GO" id="GO:0032588">
    <property type="term" value="C:trans-Golgi network membrane"/>
    <property type="evidence" value="ECO:0000304"/>
    <property type="project" value="Reactome"/>
</dbReference>
<dbReference type="GO" id="GO:0005524">
    <property type="term" value="F:ATP binding"/>
    <property type="evidence" value="ECO:0000314"/>
    <property type="project" value="UniProtKB"/>
</dbReference>
<dbReference type="GO" id="GO:0016887">
    <property type="term" value="F:ATP hydrolysis activity"/>
    <property type="evidence" value="ECO:0000314"/>
    <property type="project" value="UniProtKB"/>
</dbReference>
<dbReference type="GO" id="GO:0003924">
    <property type="term" value="F:GTPase activity"/>
    <property type="evidence" value="ECO:0007669"/>
    <property type="project" value="InterPro"/>
</dbReference>
<dbReference type="GO" id="GO:0031267">
    <property type="term" value="F:small GTPase binding"/>
    <property type="evidence" value="ECO:0000353"/>
    <property type="project" value="UniProtKB"/>
</dbReference>
<dbReference type="GO" id="GO:0031625">
    <property type="term" value="F:ubiquitin protein ligase binding"/>
    <property type="evidence" value="ECO:0000318"/>
    <property type="project" value="GO_Central"/>
</dbReference>
<dbReference type="GO" id="GO:0008584">
    <property type="term" value="P:male gonad development"/>
    <property type="evidence" value="ECO:0007669"/>
    <property type="project" value="Ensembl"/>
</dbReference>
<dbReference type="GO" id="GO:0043161">
    <property type="term" value="P:proteasome-mediated ubiquitin-dependent protein catabolic process"/>
    <property type="evidence" value="ECO:0000318"/>
    <property type="project" value="GO_Central"/>
</dbReference>
<dbReference type="GO" id="GO:0030162">
    <property type="term" value="P:regulation of proteolysis"/>
    <property type="evidence" value="ECO:0000318"/>
    <property type="project" value="GO_Central"/>
</dbReference>
<dbReference type="GO" id="GO:0042147">
    <property type="term" value="P:retrograde transport, endosome to Golgi"/>
    <property type="evidence" value="ECO:0000315"/>
    <property type="project" value="UniProtKB"/>
</dbReference>
<dbReference type="CDD" id="cd18532">
    <property type="entry name" value="BACK_RHOBTB3"/>
    <property type="match status" value="1"/>
</dbReference>
<dbReference type="CDD" id="cd18357">
    <property type="entry name" value="BTB1_POZ_RHOBTB3"/>
    <property type="match status" value="1"/>
</dbReference>
<dbReference type="CDD" id="cd18360">
    <property type="entry name" value="BTB2_POZ_RHOBTB3"/>
    <property type="match status" value="1"/>
</dbReference>
<dbReference type="FunFam" id="3.40.50.300:FF:000907">
    <property type="entry name" value="Rho related BTB domain containing 3"/>
    <property type="match status" value="1"/>
</dbReference>
<dbReference type="FunFam" id="3.30.710.10:FF:000076">
    <property type="entry name" value="rho-related BTB domain-containing protein 3"/>
    <property type="match status" value="1"/>
</dbReference>
<dbReference type="FunFam" id="3.30.710.10:FF:000111">
    <property type="entry name" value="rho-related BTB domain-containing protein 3 isoform X1"/>
    <property type="match status" value="1"/>
</dbReference>
<dbReference type="Gene3D" id="3.40.50.300">
    <property type="entry name" value="P-loop containing nucleotide triphosphate hydrolases"/>
    <property type="match status" value="1"/>
</dbReference>
<dbReference type="Gene3D" id="3.30.710.10">
    <property type="entry name" value="Potassium Channel Kv1.1, Chain A"/>
    <property type="match status" value="2"/>
</dbReference>
<dbReference type="InterPro" id="IPR000210">
    <property type="entry name" value="BTB/POZ_dom"/>
</dbReference>
<dbReference type="InterPro" id="IPR027417">
    <property type="entry name" value="P-loop_NTPase"/>
</dbReference>
<dbReference type="InterPro" id="IPR011333">
    <property type="entry name" value="SKP1/BTB/POZ_sf"/>
</dbReference>
<dbReference type="InterPro" id="IPR001806">
    <property type="entry name" value="Small_GTPase"/>
</dbReference>
<dbReference type="PANTHER" id="PTHR24413">
    <property type="entry name" value="SPECKLE-TYPE POZ PROTEIN"/>
    <property type="match status" value="1"/>
</dbReference>
<dbReference type="Pfam" id="PF00651">
    <property type="entry name" value="BTB"/>
    <property type="match status" value="1"/>
</dbReference>
<dbReference type="Pfam" id="PF00071">
    <property type="entry name" value="Ras"/>
    <property type="match status" value="1"/>
</dbReference>
<dbReference type="SMART" id="SM00225">
    <property type="entry name" value="BTB"/>
    <property type="match status" value="2"/>
</dbReference>
<dbReference type="SUPFAM" id="SSF52540">
    <property type="entry name" value="P-loop containing nucleoside triphosphate hydrolases"/>
    <property type="match status" value="1"/>
</dbReference>
<dbReference type="SUPFAM" id="SSF54695">
    <property type="entry name" value="POZ domain"/>
    <property type="match status" value="2"/>
</dbReference>
<dbReference type="PROSITE" id="PS50097">
    <property type="entry name" value="BTB"/>
    <property type="match status" value="2"/>
</dbReference>
<reference key="1">
    <citation type="journal article" date="2002" name="Gene">
        <title>Genomic organization and expression profile of the small GTPases of the RhoBTB family in human and mouse.</title>
        <authorList>
            <person name="Ramos S."/>
            <person name="Khademi F."/>
            <person name="Somesh B.P."/>
            <person name="Rivero F."/>
        </authorList>
    </citation>
    <scope>NUCLEOTIDE SEQUENCE [MRNA]</scope>
    <scope>VARIANT ASP-262</scope>
    <scope>TISSUE SPECIFICITY</scope>
</reference>
<reference key="2">
    <citation type="journal article" date="1998" name="DNA Res.">
        <title>Prediction of the coding sequences of unidentified human genes. XII. The complete sequences of 100 new cDNA clones from brain which code for large proteins in vitro.</title>
        <authorList>
            <person name="Nagase T."/>
            <person name="Ishikawa K."/>
            <person name="Suyama M."/>
            <person name="Kikuno R."/>
            <person name="Hirosawa M."/>
            <person name="Miyajima N."/>
            <person name="Tanaka A."/>
            <person name="Kotani H."/>
            <person name="Nomura N."/>
            <person name="Ohara O."/>
        </authorList>
    </citation>
    <scope>NUCLEOTIDE SEQUENCE [LARGE SCALE MRNA]</scope>
    <scope>VARIANT ASP-262</scope>
    <source>
        <tissue>Brain</tissue>
    </source>
</reference>
<reference key="3">
    <citation type="journal article" date="2004" name="Nat. Genet.">
        <title>Complete sequencing and characterization of 21,243 full-length human cDNAs.</title>
        <authorList>
            <person name="Ota T."/>
            <person name="Suzuki Y."/>
            <person name="Nishikawa T."/>
            <person name="Otsuki T."/>
            <person name="Sugiyama T."/>
            <person name="Irie R."/>
            <person name="Wakamatsu A."/>
            <person name="Hayashi K."/>
            <person name="Sato H."/>
            <person name="Nagai K."/>
            <person name="Kimura K."/>
            <person name="Makita H."/>
            <person name="Sekine M."/>
            <person name="Obayashi M."/>
            <person name="Nishi T."/>
            <person name="Shibahara T."/>
            <person name="Tanaka T."/>
            <person name="Ishii S."/>
            <person name="Yamamoto J."/>
            <person name="Saito K."/>
            <person name="Kawai Y."/>
            <person name="Isono Y."/>
            <person name="Nakamura Y."/>
            <person name="Nagahari K."/>
            <person name="Murakami K."/>
            <person name="Yasuda T."/>
            <person name="Iwayanagi T."/>
            <person name="Wagatsuma M."/>
            <person name="Shiratori A."/>
            <person name="Sudo H."/>
            <person name="Hosoiri T."/>
            <person name="Kaku Y."/>
            <person name="Kodaira H."/>
            <person name="Kondo H."/>
            <person name="Sugawara M."/>
            <person name="Takahashi M."/>
            <person name="Kanda K."/>
            <person name="Yokoi T."/>
            <person name="Furuya T."/>
            <person name="Kikkawa E."/>
            <person name="Omura Y."/>
            <person name="Abe K."/>
            <person name="Kamihara K."/>
            <person name="Katsuta N."/>
            <person name="Sato K."/>
            <person name="Tanikawa M."/>
            <person name="Yamazaki M."/>
            <person name="Ninomiya K."/>
            <person name="Ishibashi T."/>
            <person name="Yamashita H."/>
            <person name="Murakawa K."/>
            <person name="Fujimori K."/>
            <person name="Tanai H."/>
            <person name="Kimata M."/>
            <person name="Watanabe M."/>
            <person name="Hiraoka S."/>
            <person name="Chiba Y."/>
            <person name="Ishida S."/>
            <person name="Ono Y."/>
            <person name="Takiguchi S."/>
            <person name="Watanabe S."/>
            <person name="Yosida M."/>
            <person name="Hotuta T."/>
            <person name="Kusano J."/>
            <person name="Kanehori K."/>
            <person name="Takahashi-Fujii A."/>
            <person name="Hara H."/>
            <person name="Tanase T.-O."/>
            <person name="Nomura Y."/>
            <person name="Togiya S."/>
            <person name="Komai F."/>
            <person name="Hara R."/>
            <person name="Takeuchi K."/>
            <person name="Arita M."/>
            <person name="Imose N."/>
            <person name="Musashino K."/>
            <person name="Yuuki H."/>
            <person name="Oshima A."/>
            <person name="Sasaki N."/>
            <person name="Aotsuka S."/>
            <person name="Yoshikawa Y."/>
            <person name="Matsunawa H."/>
            <person name="Ichihara T."/>
            <person name="Shiohata N."/>
            <person name="Sano S."/>
            <person name="Moriya S."/>
            <person name="Momiyama H."/>
            <person name="Satoh N."/>
            <person name="Takami S."/>
            <person name="Terashima Y."/>
            <person name="Suzuki O."/>
            <person name="Nakagawa S."/>
            <person name="Senoh A."/>
            <person name="Mizoguchi H."/>
            <person name="Goto Y."/>
            <person name="Shimizu F."/>
            <person name="Wakebe H."/>
            <person name="Hishigaki H."/>
            <person name="Watanabe T."/>
            <person name="Sugiyama A."/>
            <person name="Takemoto M."/>
            <person name="Kawakami B."/>
            <person name="Yamazaki M."/>
            <person name="Watanabe K."/>
            <person name="Kumagai A."/>
            <person name="Itakura S."/>
            <person name="Fukuzumi Y."/>
            <person name="Fujimori Y."/>
            <person name="Komiyama M."/>
            <person name="Tashiro H."/>
            <person name="Tanigami A."/>
            <person name="Fujiwara T."/>
            <person name="Ono T."/>
            <person name="Yamada K."/>
            <person name="Fujii Y."/>
            <person name="Ozaki K."/>
            <person name="Hirao M."/>
            <person name="Ohmori Y."/>
            <person name="Kawabata A."/>
            <person name="Hikiji T."/>
            <person name="Kobatake N."/>
            <person name="Inagaki H."/>
            <person name="Ikema Y."/>
            <person name="Okamoto S."/>
            <person name="Okitani R."/>
            <person name="Kawakami T."/>
            <person name="Noguchi S."/>
            <person name="Itoh T."/>
            <person name="Shigeta K."/>
            <person name="Senba T."/>
            <person name="Matsumura K."/>
            <person name="Nakajima Y."/>
            <person name="Mizuno T."/>
            <person name="Morinaga M."/>
            <person name="Sasaki M."/>
            <person name="Togashi T."/>
            <person name="Oyama M."/>
            <person name="Hata H."/>
            <person name="Watanabe M."/>
            <person name="Komatsu T."/>
            <person name="Mizushima-Sugano J."/>
            <person name="Satoh T."/>
            <person name="Shirai Y."/>
            <person name="Takahashi Y."/>
            <person name="Nakagawa K."/>
            <person name="Okumura K."/>
            <person name="Nagase T."/>
            <person name="Nomura N."/>
            <person name="Kikuchi H."/>
            <person name="Masuho Y."/>
            <person name="Yamashita R."/>
            <person name="Nakai K."/>
            <person name="Yada T."/>
            <person name="Nakamura Y."/>
            <person name="Ohara O."/>
            <person name="Isogai T."/>
            <person name="Sugano S."/>
        </authorList>
    </citation>
    <scope>NUCLEOTIDE SEQUENCE [LARGE SCALE MRNA]</scope>
    <source>
        <tissue>Hippocampus</tissue>
    </source>
</reference>
<reference key="4">
    <citation type="journal article" date="2004" name="Genome Res.">
        <title>The status, quality, and expansion of the NIH full-length cDNA project: the Mammalian Gene Collection (MGC).</title>
        <authorList>
            <consortium name="The MGC Project Team"/>
        </authorList>
    </citation>
    <scope>NUCLEOTIDE SEQUENCE [LARGE SCALE MRNA]</scope>
    <scope>VARIANT GLN-20</scope>
    <source>
        <tissue>Brain</tissue>
        <tissue>Muscle</tissue>
    </source>
</reference>
<reference key="5">
    <citation type="journal article" date="2009" name="Cell">
        <title>RhoBTB3: a Rho GTPase-family ATPase required for endosome to Golgi transport.</title>
        <authorList>
            <person name="Espinosa E.J."/>
            <person name="Calero M."/>
            <person name="Sridevi K."/>
            <person name="Pfeffer S.R."/>
        </authorList>
    </citation>
    <scope>FUNCTION</scope>
    <scope>SUBCELLULAR LOCATION</scope>
    <scope>BIOPHYSICOCHEMICAL PROPERTIES</scope>
    <scope>ATP-BINDING</scope>
    <scope>INTERACTION WITH RAB9A; RAB9B AND M6PRBP1</scope>
    <scope>MUTAGENESIS OF ASN-138; ALA-498; ASP-532; ILE-533 AND 608-CYS--MET-611</scope>
</reference>
<proteinExistence type="evidence at protein level"/>
<organism>
    <name type="scientific">Homo sapiens</name>
    <name type="common">Human</name>
    <dbReference type="NCBI Taxonomy" id="9606"/>
    <lineage>
        <taxon>Eukaryota</taxon>
        <taxon>Metazoa</taxon>
        <taxon>Chordata</taxon>
        <taxon>Craniata</taxon>
        <taxon>Vertebrata</taxon>
        <taxon>Euteleostomi</taxon>
        <taxon>Mammalia</taxon>
        <taxon>Eutheria</taxon>
        <taxon>Euarchontoglires</taxon>
        <taxon>Primates</taxon>
        <taxon>Haplorrhini</taxon>
        <taxon>Catarrhini</taxon>
        <taxon>Hominidae</taxon>
        <taxon>Homo</taxon>
    </lineage>
</organism>
<name>RHBT3_HUMAN</name>
<accession>O94955</accession>
<accession>A0PJA4</accession>
<accession>A8K1W9</accession>
<accession>Q8IW06</accession>
<comment type="function">
    <text evidence="5">Rab9-regulated ATPase required for endosome to Golgi transport. Involved in transport vesicle docking at the Golgi complex, possibly by participating in release M6PRBP1/TIP47 from vesicles to permit their efficient docking and fusion at the Golgi. Specifically binds Rab9, but not other Rab proteins. Has low intrinsic ATPase activity due to autoinhibition, which is relieved by Rab9.</text>
</comment>
<comment type="biophysicochemical properties">
    <kinetics>
        <KM evidence="5">48 uM for ATP</KM>
    </kinetics>
</comment>
<comment type="subunit">
    <text evidence="5">Interacts with RAB9A and RAB9B (at lower level compared to RAB9A-binding). Interacts with M6PRBP1/TIP47.</text>
</comment>
<comment type="interaction">
    <interactant intactId="EBI-2367123">
        <id>O94955</id>
    </interactant>
    <interactant intactId="EBI-711810">
        <id>O14503</id>
        <label>BHLHE40</label>
    </interactant>
    <organismsDiffer>false</organismsDiffer>
    <experiments>7</experiments>
</comment>
<comment type="interaction">
    <interactant intactId="EBI-2367123">
        <id>O94955</id>
    </interactant>
    <interactant intactId="EBI-2349927">
        <id>Q5JST6</id>
        <label>EFHC2</label>
    </interactant>
    <organismsDiffer>false</organismsDiffer>
    <experiments>3</experiments>
</comment>
<comment type="interaction">
    <interactant intactId="EBI-2367123">
        <id>O94955</id>
    </interactant>
    <interactant intactId="EBI-8638439">
        <id>Q8IYA8</id>
        <label>IHO1</label>
    </interactant>
    <organismsDiffer>false</organismsDiffer>
    <experiments>3</experiments>
</comment>
<comment type="interaction">
    <interactant intactId="EBI-2367123">
        <id>O94955</id>
    </interactant>
    <interactant intactId="EBI-1055254">
        <id>Q8WXH2</id>
        <label>JPH3</label>
    </interactant>
    <organismsDiffer>false</organismsDiffer>
    <experiments>3</experiments>
</comment>
<comment type="interaction">
    <interactant intactId="EBI-2367123">
        <id>O94955</id>
    </interactant>
    <interactant intactId="EBI-11985629">
        <id>Q96JM7-2</id>
        <label>L3MBTL3</label>
    </interactant>
    <organismsDiffer>false</organismsDiffer>
    <experiments>3</experiments>
</comment>
<comment type="interaction">
    <interactant intactId="EBI-2367123">
        <id>O94955</id>
    </interactant>
    <interactant intactId="EBI-2876622">
        <id>Q9UPG8</id>
        <label>PLAGL2</label>
    </interactant>
    <organismsDiffer>false</organismsDiffer>
    <experiments>3</experiments>
</comment>
<comment type="interaction">
    <interactant intactId="EBI-2367123">
        <id>O94955</id>
    </interactant>
    <interactant intactId="EBI-740322">
        <id>Q93062</id>
        <label>RBPMS</label>
    </interactant>
    <organismsDiffer>false</organismsDiffer>
    <experiments>4</experiments>
</comment>
<comment type="interaction">
    <interactant intactId="EBI-2367123">
        <id>O94955</id>
    </interactant>
    <interactant intactId="EBI-10191361">
        <id>Q96SF7</id>
        <label>TBX15</label>
    </interactant>
    <organismsDiffer>false</organismsDiffer>
    <experiments>3</experiments>
</comment>
<comment type="interaction">
    <interactant intactId="EBI-2367123">
        <id>O94955</id>
    </interactant>
    <interactant intactId="EBI-746004">
        <id>Q5T124</id>
        <label>UBXN11</label>
    </interactant>
    <organismsDiffer>false</organismsDiffer>
    <experiments>4</experiments>
</comment>
<comment type="interaction">
    <interactant intactId="EBI-2367123">
        <id>O94955</id>
    </interactant>
    <interactant intactId="EBI-11975223">
        <id>Q70EL1-9</id>
        <label>USP54</label>
    </interactant>
    <organismsDiffer>false</organismsDiffer>
    <experiments>3</experiments>
</comment>
<comment type="interaction">
    <interactant intactId="EBI-2367123">
        <id>O94955</id>
    </interactant>
    <interactant intactId="EBI-527853">
        <id>Q9UGI0</id>
        <label>ZRANB1</label>
    </interactant>
    <organismsDiffer>false</organismsDiffer>
    <experiments>3</experiments>
</comment>
<comment type="interaction">
    <interactant intactId="EBI-2367123">
        <id>O94955</id>
    </interactant>
    <interactant intactId="EBI-1646050">
        <id>P24408</id>
        <label>RAB9A</label>
    </interactant>
    <organismsDiffer>true</organismsDiffer>
    <experiments>5</experiments>
</comment>
<comment type="subcellular location">
    <subcellularLocation>
        <location evidence="5">Golgi apparatus</location>
    </subcellularLocation>
</comment>
<comment type="tissue specificity">
    <text evidence="3">Ubiquitous. Highly expressed in neural and cardiac tissues, pancreas, placenta and testis.</text>
</comment>
<comment type="domain">
    <text>Although predicted to be a GTP-binding protein because of the presence of a Rho-like region, binds and hydrolyzes ATP. In contrast to Rho-like proteins, the conserved Asp residue in position 138 in the G4 region is replaced by an Asn, decreasing the ability to bind GTP.</text>
</comment>
<comment type="sequence caution" evidence="6">
    <conflict type="erroneous initiation">
        <sequence resource="EMBL-CDS" id="BAA74901"/>
    </conflict>
</comment>
<keyword id="KW-0067">ATP-binding</keyword>
<keyword id="KW-0333">Golgi apparatus</keyword>
<keyword id="KW-0378">Hydrolase</keyword>
<keyword id="KW-0547">Nucleotide-binding</keyword>
<keyword id="KW-1267">Proteomics identification</keyword>
<keyword id="KW-1185">Reference proteome</keyword>
<keyword id="KW-0677">Repeat</keyword>
<keyword id="KW-0813">Transport</keyword>